<gene>
    <name type="ordered locus">LMOf2365_1711</name>
</gene>
<organism>
    <name type="scientific">Listeria monocytogenes serotype 4b (strain F2365)</name>
    <dbReference type="NCBI Taxonomy" id="265669"/>
    <lineage>
        <taxon>Bacteria</taxon>
        <taxon>Bacillati</taxon>
        <taxon>Bacillota</taxon>
        <taxon>Bacilli</taxon>
        <taxon>Bacillales</taxon>
        <taxon>Listeriaceae</taxon>
        <taxon>Listeria</taxon>
    </lineage>
</organism>
<comment type="function">
    <text evidence="1">Has nucleoside phosphatase activity towards nucleoside triphosphates and nucleoside diphosphates.</text>
</comment>
<comment type="catalytic activity">
    <reaction evidence="1">
        <text>a ribonucleoside 5'-triphosphate + H2O = a ribonucleoside 5'-diphosphate + phosphate + H(+)</text>
        <dbReference type="Rhea" id="RHEA:23680"/>
        <dbReference type="ChEBI" id="CHEBI:15377"/>
        <dbReference type="ChEBI" id="CHEBI:15378"/>
        <dbReference type="ChEBI" id="CHEBI:43474"/>
        <dbReference type="ChEBI" id="CHEBI:57930"/>
        <dbReference type="ChEBI" id="CHEBI:61557"/>
        <dbReference type="EC" id="3.6.1.15"/>
    </reaction>
</comment>
<comment type="catalytic activity">
    <reaction evidence="1">
        <text>a ribonucleoside 5'-diphosphate + H2O = a ribonucleoside 5'-phosphate + phosphate + H(+)</text>
        <dbReference type="Rhea" id="RHEA:36799"/>
        <dbReference type="ChEBI" id="CHEBI:15377"/>
        <dbReference type="ChEBI" id="CHEBI:15378"/>
        <dbReference type="ChEBI" id="CHEBI:43474"/>
        <dbReference type="ChEBI" id="CHEBI:57930"/>
        <dbReference type="ChEBI" id="CHEBI:58043"/>
        <dbReference type="EC" id="3.6.1.6"/>
    </reaction>
</comment>
<comment type="cofactor">
    <cofactor evidence="1">
        <name>Mg(2+)</name>
        <dbReference type="ChEBI" id="CHEBI:18420"/>
    </cofactor>
</comment>
<comment type="similarity">
    <text evidence="1">Belongs to the Ntdp family.</text>
</comment>
<protein>
    <recommendedName>
        <fullName evidence="1">Nucleoside triphosphate/diphosphate phosphatase</fullName>
        <ecNumber evidence="1">3.6.1.15</ecNumber>
        <ecNumber evidence="1">3.6.1.6</ecNumber>
    </recommendedName>
</protein>
<dbReference type="EC" id="3.6.1.15" evidence="1"/>
<dbReference type="EC" id="3.6.1.6" evidence="1"/>
<dbReference type="EMBL" id="AE017262">
    <property type="protein sequence ID" value="AAT04484.1"/>
    <property type="molecule type" value="Genomic_DNA"/>
</dbReference>
<dbReference type="RefSeq" id="WP_003723875.1">
    <property type="nucleotide sequence ID" value="NC_002973.6"/>
</dbReference>
<dbReference type="SMR" id="Q71YY0"/>
<dbReference type="KEGG" id="lmf:LMOf2365_1711"/>
<dbReference type="HOGENOM" id="CLU_109787_1_0_9"/>
<dbReference type="GO" id="GO:0000287">
    <property type="term" value="F:magnesium ion binding"/>
    <property type="evidence" value="ECO:0007669"/>
    <property type="project" value="UniProtKB-UniRule"/>
</dbReference>
<dbReference type="GO" id="GO:0017110">
    <property type="term" value="F:nucleoside diphosphate phosphatase activity"/>
    <property type="evidence" value="ECO:0007669"/>
    <property type="project" value="UniProtKB-UniRule"/>
</dbReference>
<dbReference type="GO" id="GO:0017111">
    <property type="term" value="F:ribonucleoside triphosphate phosphatase activity"/>
    <property type="evidence" value="ECO:0007669"/>
    <property type="project" value="UniProtKB-UniRule"/>
</dbReference>
<dbReference type="Gene3D" id="2.40.380.10">
    <property type="entry name" value="FomD-like"/>
    <property type="match status" value="1"/>
</dbReference>
<dbReference type="HAMAP" id="MF_01568">
    <property type="entry name" value="Ntdp"/>
    <property type="match status" value="1"/>
</dbReference>
<dbReference type="InterPro" id="IPR007295">
    <property type="entry name" value="DUF402"/>
</dbReference>
<dbReference type="InterPro" id="IPR035930">
    <property type="entry name" value="FomD-like_sf"/>
</dbReference>
<dbReference type="InterPro" id="IPR050212">
    <property type="entry name" value="Ntdp-like"/>
</dbReference>
<dbReference type="InterPro" id="IPR016882">
    <property type="entry name" value="SA1684"/>
</dbReference>
<dbReference type="NCBIfam" id="NF010183">
    <property type="entry name" value="PRK13662.1"/>
    <property type="match status" value="1"/>
</dbReference>
<dbReference type="PANTHER" id="PTHR39159">
    <property type="match status" value="1"/>
</dbReference>
<dbReference type="PANTHER" id="PTHR39159:SF1">
    <property type="entry name" value="UPF0374 PROTEIN YGAC"/>
    <property type="match status" value="1"/>
</dbReference>
<dbReference type="Pfam" id="PF04167">
    <property type="entry name" value="DUF402"/>
    <property type="match status" value="1"/>
</dbReference>
<dbReference type="PIRSF" id="PIRSF028345">
    <property type="entry name" value="UCP028345"/>
    <property type="match status" value="1"/>
</dbReference>
<dbReference type="SUPFAM" id="SSF159234">
    <property type="entry name" value="FomD-like"/>
    <property type="match status" value="1"/>
</dbReference>
<sequence length="175" mass="21134">MYLPKEKEIIQIKSYKHNGKLHRTWKKTVVLKSTENIIIGGNDHTLVVEADGRKWVTREPSICYFHSDYWFNVISMIREDGIYHYCNLGTPFAVDEQALKYIDYDLDIKVFPDGRFHLLDEGEYEQHRRQMKYPDSIDRILRHNVDVLSHWILDKKGPFSPDYIDIWYEKYKEYR</sequence>
<feature type="chain" id="PRO_0000248101" description="Nucleoside triphosphate/diphosphate phosphatase">
    <location>
        <begin position="1"/>
        <end position="175"/>
    </location>
</feature>
<feature type="active site" description="Proton donor" evidence="1">
    <location>
        <position position="23"/>
    </location>
</feature>
<feature type="binding site" evidence="1">
    <location>
        <position position="87"/>
    </location>
    <ligand>
        <name>Mg(2+)</name>
        <dbReference type="ChEBI" id="CHEBI:18420"/>
        <label>1</label>
    </ligand>
</feature>
<feature type="binding site" evidence="1">
    <location>
        <position position="103"/>
    </location>
    <ligand>
        <name>Mg(2+)</name>
        <dbReference type="ChEBI" id="CHEBI:18420"/>
        <label>1</label>
    </ligand>
</feature>
<feature type="binding site" evidence="1">
    <location>
        <position position="105"/>
    </location>
    <ligand>
        <name>Mg(2+)</name>
        <dbReference type="ChEBI" id="CHEBI:18420"/>
        <label>2</label>
    </ligand>
</feature>
<feature type="binding site" evidence="1">
    <location>
        <position position="107"/>
    </location>
    <ligand>
        <name>Mg(2+)</name>
        <dbReference type="ChEBI" id="CHEBI:18420"/>
        <label>1</label>
    </ligand>
</feature>
<feature type="binding site" evidence="1">
    <location>
        <position position="107"/>
    </location>
    <ligand>
        <name>Mg(2+)</name>
        <dbReference type="ChEBI" id="CHEBI:18420"/>
        <label>2</label>
    </ligand>
</feature>
<feature type="binding site" evidence="1">
    <location>
        <position position="120"/>
    </location>
    <ligand>
        <name>Mg(2+)</name>
        <dbReference type="ChEBI" id="CHEBI:18420"/>
        <label>2</label>
    </ligand>
</feature>
<feature type="binding site" evidence="1">
    <location>
        <position position="123"/>
    </location>
    <ligand>
        <name>Mg(2+)</name>
        <dbReference type="ChEBI" id="CHEBI:18420"/>
        <label>2</label>
    </ligand>
</feature>
<reference key="1">
    <citation type="journal article" date="2004" name="Nucleic Acids Res.">
        <title>Whole genome comparisons of serotype 4b and 1/2a strains of the food-borne pathogen Listeria monocytogenes reveal new insights into the core genome components of this species.</title>
        <authorList>
            <person name="Nelson K.E."/>
            <person name="Fouts D.E."/>
            <person name="Mongodin E.F."/>
            <person name="Ravel J."/>
            <person name="DeBoy R.T."/>
            <person name="Kolonay J.F."/>
            <person name="Rasko D.A."/>
            <person name="Angiuoli S.V."/>
            <person name="Gill S.R."/>
            <person name="Paulsen I.T."/>
            <person name="Peterson J.D."/>
            <person name="White O."/>
            <person name="Nelson W.C."/>
            <person name="Nierman W.C."/>
            <person name="Beanan M.J."/>
            <person name="Brinkac L.M."/>
            <person name="Daugherty S.C."/>
            <person name="Dodson R.J."/>
            <person name="Durkin A.S."/>
            <person name="Madupu R."/>
            <person name="Haft D.H."/>
            <person name="Selengut J."/>
            <person name="Van Aken S.E."/>
            <person name="Khouri H.M."/>
            <person name="Fedorova N."/>
            <person name="Forberger H.A."/>
            <person name="Tran B."/>
            <person name="Kathariou S."/>
            <person name="Wonderling L.D."/>
            <person name="Uhlich G.A."/>
            <person name="Bayles D.O."/>
            <person name="Luchansky J.B."/>
            <person name="Fraser C.M."/>
        </authorList>
    </citation>
    <scope>NUCLEOTIDE SEQUENCE [LARGE SCALE GENOMIC DNA]</scope>
    <source>
        <strain>F2365</strain>
    </source>
</reference>
<proteinExistence type="inferred from homology"/>
<accession>Q71YY0</accession>
<evidence type="ECO:0000255" key="1">
    <source>
        <dbReference type="HAMAP-Rule" id="MF_01568"/>
    </source>
</evidence>
<keyword id="KW-0378">Hydrolase</keyword>
<keyword id="KW-0460">Magnesium</keyword>
<keyword id="KW-0479">Metal-binding</keyword>
<name>NTDP_LISMF</name>